<dbReference type="EC" id="1.5.1.42" evidence="1"/>
<dbReference type="EMBL" id="CP000819">
    <property type="protein sequence ID" value="ACT38692.1"/>
    <property type="molecule type" value="Genomic_DNA"/>
</dbReference>
<dbReference type="RefSeq" id="WP_001028095.1">
    <property type="nucleotide sequence ID" value="NC_012967.1"/>
</dbReference>
<dbReference type="SMR" id="C6UFB8"/>
<dbReference type="GeneID" id="75171083"/>
<dbReference type="KEGG" id="ebr:ECB_01010"/>
<dbReference type="HOGENOM" id="CLU_059021_2_2_6"/>
<dbReference type="BioCyc" id="ECOL413997:GCQD-1210-MONOMER"/>
<dbReference type="GO" id="GO:0010181">
    <property type="term" value="F:FMN binding"/>
    <property type="evidence" value="ECO:0007669"/>
    <property type="project" value="InterPro"/>
</dbReference>
<dbReference type="GO" id="GO:0052874">
    <property type="term" value="F:FMN reductase (NADH) activity"/>
    <property type="evidence" value="ECO:0007669"/>
    <property type="project" value="UniProtKB-EC"/>
</dbReference>
<dbReference type="GO" id="GO:0008752">
    <property type="term" value="F:FMN reductase [NAD(P)H] activity"/>
    <property type="evidence" value="ECO:0007669"/>
    <property type="project" value="InterPro"/>
</dbReference>
<dbReference type="GO" id="GO:0042602">
    <property type="term" value="F:riboflavin reductase (NADPH) activity"/>
    <property type="evidence" value="ECO:0007669"/>
    <property type="project" value="UniProtKB-UniRule"/>
</dbReference>
<dbReference type="GO" id="GO:0019740">
    <property type="term" value="P:nitrogen utilization"/>
    <property type="evidence" value="ECO:0007669"/>
    <property type="project" value="UniProtKB-UniRule"/>
</dbReference>
<dbReference type="GO" id="GO:0006212">
    <property type="term" value="P:uracil catabolic process"/>
    <property type="evidence" value="ECO:0007669"/>
    <property type="project" value="UniProtKB-UniRule"/>
</dbReference>
<dbReference type="FunFam" id="2.30.110.10:FF:000002">
    <property type="entry name" value="FMN reductase (NADH) RutF"/>
    <property type="match status" value="1"/>
</dbReference>
<dbReference type="Gene3D" id="2.30.110.10">
    <property type="entry name" value="Electron Transport, Fmn-binding Protein, Chain A"/>
    <property type="match status" value="1"/>
</dbReference>
<dbReference type="HAMAP" id="MF_00833">
    <property type="entry name" value="RutF"/>
    <property type="match status" value="1"/>
</dbReference>
<dbReference type="InterPro" id="IPR002563">
    <property type="entry name" value="Flavin_Rdtase-like_dom"/>
</dbReference>
<dbReference type="InterPro" id="IPR050268">
    <property type="entry name" value="NADH-dep_flavin_reductase"/>
</dbReference>
<dbReference type="InterPro" id="IPR019917">
    <property type="entry name" value="RutF"/>
</dbReference>
<dbReference type="InterPro" id="IPR012349">
    <property type="entry name" value="Split_barrel_FMN-bd"/>
</dbReference>
<dbReference type="NCBIfam" id="TIGR03615">
    <property type="entry name" value="RutF"/>
    <property type="match status" value="1"/>
</dbReference>
<dbReference type="PANTHER" id="PTHR30466">
    <property type="entry name" value="FLAVIN REDUCTASE"/>
    <property type="match status" value="1"/>
</dbReference>
<dbReference type="PANTHER" id="PTHR30466:SF1">
    <property type="entry name" value="FMN REDUCTASE (NADH) RUTF"/>
    <property type="match status" value="1"/>
</dbReference>
<dbReference type="Pfam" id="PF01613">
    <property type="entry name" value="Flavin_Reduct"/>
    <property type="match status" value="1"/>
</dbReference>
<dbReference type="SMART" id="SM00903">
    <property type="entry name" value="Flavin_Reduct"/>
    <property type="match status" value="1"/>
</dbReference>
<dbReference type="SUPFAM" id="SSF50475">
    <property type="entry name" value="FMN-binding split barrel"/>
    <property type="match status" value="1"/>
</dbReference>
<gene>
    <name evidence="1" type="primary">rutF</name>
    <name type="ordered locus">ECB_01010</name>
</gene>
<protein>
    <recommendedName>
        <fullName evidence="1">FMN reductase (NADH) RutF</fullName>
        <ecNumber evidence="1">1.5.1.42</ecNumber>
    </recommendedName>
    <alternativeName>
        <fullName evidence="1">FMN reductase</fullName>
    </alternativeName>
    <alternativeName>
        <fullName evidence="1">NADH-flavin reductase RutF</fullName>
    </alternativeName>
    <alternativeName>
        <fullName evidence="1">NADH:flavin oxidoreductase</fullName>
    </alternativeName>
</protein>
<comment type="function">
    <text evidence="1">Catalyzes the reduction of FMN to FMNH2 which is used to reduce pyrimidine by RutA via the Rut pathway.</text>
</comment>
<comment type="catalytic activity">
    <reaction evidence="1">
        <text>FMNH2 + NAD(+) = FMN + NADH + 2 H(+)</text>
        <dbReference type="Rhea" id="RHEA:21620"/>
        <dbReference type="ChEBI" id="CHEBI:15378"/>
        <dbReference type="ChEBI" id="CHEBI:57540"/>
        <dbReference type="ChEBI" id="CHEBI:57618"/>
        <dbReference type="ChEBI" id="CHEBI:57945"/>
        <dbReference type="ChEBI" id="CHEBI:58210"/>
        <dbReference type="EC" id="1.5.1.42"/>
    </reaction>
</comment>
<comment type="induction">
    <text evidence="1">Up-regulated by the nitrogen regulatory protein C (NtrC also called GlnG) and repressed by RutR.</text>
</comment>
<comment type="similarity">
    <text evidence="1">Belongs to the non-flavoprotein flavin reductase family. RutF subfamily.</text>
</comment>
<organism>
    <name type="scientific">Escherichia coli (strain B / REL606)</name>
    <dbReference type="NCBI Taxonomy" id="413997"/>
    <lineage>
        <taxon>Bacteria</taxon>
        <taxon>Pseudomonadati</taxon>
        <taxon>Pseudomonadota</taxon>
        <taxon>Gammaproteobacteria</taxon>
        <taxon>Enterobacterales</taxon>
        <taxon>Enterobacteriaceae</taxon>
        <taxon>Escherichia</taxon>
    </lineage>
</organism>
<accession>C6UFB8</accession>
<proteinExistence type="inferred from homology"/>
<evidence type="ECO:0000255" key="1">
    <source>
        <dbReference type="HAMAP-Rule" id="MF_00833"/>
    </source>
</evidence>
<reference key="1">
    <citation type="journal article" date="2009" name="J. Mol. Biol.">
        <title>Genome sequences of Escherichia coli B strains REL606 and BL21(DE3).</title>
        <authorList>
            <person name="Jeong H."/>
            <person name="Barbe V."/>
            <person name="Lee C.H."/>
            <person name="Vallenet D."/>
            <person name="Yu D.S."/>
            <person name="Choi S.H."/>
            <person name="Couloux A."/>
            <person name="Lee S.W."/>
            <person name="Yoon S.H."/>
            <person name="Cattolico L."/>
            <person name="Hur C.G."/>
            <person name="Park H.S."/>
            <person name="Segurens B."/>
            <person name="Kim S.C."/>
            <person name="Oh T.K."/>
            <person name="Lenski R.E."/>
            <person name="Studier F.W."/>
            <person name="Daegelen P."/>
            <person name="Kim J.F."/>
        </authorList>
    </citation>
    <scope>NUCLEOTIDE SEQUENCE [LARGE SCALE GENOMIC DNA]</scope>
    <source>
        <strain>B / REL606</strain>
    </source>
</reference>
<name>RUTF_ECOBR</name>
<feature type="chain" id="PRO_0000403002" description="FMN reductase (NADH) RutF">
    <location>
        <begin position="1"/>
        <end position="164"/>
    </location>
</feature>
<keyword id="KW-0285">Flavoprotein</keyword>
<keyword id="KW-0288">FMN</keyword>
<keyword id="KW-0520">NAD</keyword>
<keyword id="KW-0560">Oxidoreductase</keyword>
<sequence>MNIVDQQTFRDAMSCMGAAVNIITTDGPAGRAGFTASAVCSVTDTPPTLLVCLNRGASVWPVFNENRTLCVNTLSAGQEPLSNLFGGKTPMEHRFAAARWQTGVTGCPQLEEALVSFDCRISQVVSVGTHDILFCAIEAIHRHATPYGLVWFDRSYHALMRPAC</sequence>